<evidence type="ECO:0000255" key="1">
    <source>
        <dbReference type="HAMAP-Rule" id="MF_00113"/>
    </source>
</evidence>
<proteinExistence type="inferred from homology"/>
<name>QUEA_RHOPT</name>
<comment type="function">
    <text evidence="1">Transfers and isomerizes the ribose moiety from AdoMet to the 7-aminomethyl group of 7-deazaguanine (preQ1-tRNA) to give epoxyqueuosine (oQ-tRNA).</text>
</comment>
<comment type="catalytic activity">
    <reaction evidence="1">
        <text>7-aminomethyl-7-carbaguanosine(34) in tRNA + S-adenosyl-L-methionine = epoxyqueuosine(34) in tRNA + adenine + L-methionine + 2 H(+)</text>
        <dbReference type="Rhea" id="RHEA:32155"/>
        <dbReference type="Rhea" id="RHEA-COMP:10342"/>
        <dbReference type="Rhea" id="RHEA-COMP:18582"/>
        <dbReference type="ChEBI" id="CHEBI:15378"/>
        <dbReference type="ChEBI" id="CHEBI:16708"/>
        <dbReference type="ChEBI" id="CHEBI:57844"/>
        <dbReference type="ChEBI" id="CHEBI:59789"/>
        <dbReference type="ChEBI" id="CHEBI:82833"/>
        <dbReference type="ChEBI" id="CHEBI:194443"/>
        <dbReference type="EC" id="2.4.99.17"/>
    </reaction>
</comment>
<comment type="pathway">
    <text evidence="1">tRNA modification; tRNA-queuosine biosynthesis.</text>
</comment>
<comment type="subunit">
    <text evidence="1">Monomer.</text>
</comment>
<comment type="subcellular location">
    <subcellularLocation>
        <location evidence="1">Cytoplasm</location>
    </subcellularLocation>
</comment>
<comment type="similarity">
    <text evidence="1">Belongs to the QueA family.</text>
</comment>
<organism>
    <name type="scientific">Rhodopseudomonas palustris (strain TIE-1)</name>
    <dbReference type="NCBI Taxonomy" id="395960"/>
    <lineage>
        <taxon>Bacteria</taxon>
        <taxon>Pseudomonadati</taxon>
        <taxon>Pseudomonadota</taxon>
        <taxon>Alphaproteobacteria</taxon>
        <taxon>Hyphomicrobiales</taxon>
        <taxon>Nitrobacteraceae</taxon>
        <taxon>Rhodopseudomonas</taxon>
    </lineage>
</organism>
<accession>B3QIN0</accession>
<keyword id="KW-0963">Cytoplasm</keyword>
<keyword id="KW-0671">Queuosine biosynthesis</keyword>
<keyword id="KW-0949">S-adenosyl-L-methionine</keyword>
<keyword id="KW-0808">Transferase</keyword>
<reference key="1">
    <citation type="submission" date="2008-05" db="EMBL/GenBank/DDBJ databases">
        <title>Complete sequence of Rhodopseudomonas palustris TIE-1.</title>
        <authorList>
            <consortium name="US DOE Joint Genome Institute"/>
            <person name="Lucas S."/>
            <person name="Copeland A."/>
            <person name="Lapidus A."/>
            <person name="Glavina del Rio T."/>
            <person name="Dalin E."/>
            <person name="Tice H."/>
            <person name="Pitluck S."/>
            <person name="Chain P."/>
            <person name="Malfatti S."/>
            <person name="Shin M."/>
            <person name="Vergez L."/>
            <person name="Lang D."/>
            <person name="Schmutz J."/>
            <person name="Larimer F."/>
            <person name="Land M."/>
            <person name="Hauser L."/>
            <person name="Kyrpides N."/>
            <person name="Mikhailova N."/>
            <person name="Emerson D."/>
            <person name="Newman D.K."/>
            <person name="Roden E."/>
            <person name="Richardson P."/>
        </authorList>
    </citation>
    <scope>NUCLEOTIDE SEQUENCE [LARGE SCALE GENOMIC DNA]</scope>
    <source>
        <strain>TIE-1</strain>
    </source>
</reference>
<protein>
    <recommendedName>
        <fullName evidence="1">S-adenosylmethionine:tRNA ribosyltransferase-isomerase</fullName>
        <ecNumber evidence="1">2.4.99.17</ecNumber>
    </recommendedName>
    <alternativeName>
        <fullName evidence="1">Queuosine biosynthesis protein QueA</fullName>
    </alternativeName>
</protein>
<feature type="chain" id="PRO_1000094808" description="S-adenosylmethionine:tRNA ribosyltransferase-isomerase">
    <location>
        <begin position="1"/>
        <end position="360"/>
    </location>
</feature>
<dbReference type="EC" id="2.4.99.17" evidence="1"/>
<dbReference type="EMBL" id="CP001096">
    <property type="protein sequence ID" value="ACF01383.1"/>
    <property type="molecule type" value="Genomic_DNA"/>
</dbReference>
<dbReference type="RefSeq" id="WP_012496047.1">
    <property type="nucleotide sequence ID" value="NC_011004.1"/>
</dbReference>
<dbReference type="SMR" id="B3QIN0"/>
<dbReference type="KEGG" id="rpt:Rpal_2875"/>
<dbReference type="HOGENOM" id="CLU_039110_1_1_5"/>
<dbReference type="OrthoDB" id="9805933at2"/>
<dbReference type="UniPathway" id="UPA00392"/>
<dbReference type="Proteomes" id="UP000001725">
    <property type="component" value="Chromosome"/>
</dbReference>
<dbReference type="GO" id="GO:0005737">
    <property type="term" value="C:cytoplasm"/>
    <property type="evidence" value="ECO:0007669"/>
    <property type="project" value="UniProtKB-SubCell"/>
</dbReference>
<dbReference type="GO" id="GO:0051075">
    <property type="term" value="F:S-adenosylmethionine:tRNA ribosyltransferase-isomerase activity"/>
    <property type="evidence" value="ECO:0007669"/>
    <property type="project" value="UniProtKB-EC"/>
</dbReference>
<dbReference type="GO" id="GO:0008616">
    <property type="term" value="P:queuosine biosynthetic process"/>
    <property type="evidence" value="ECO:0007669"/>
    <property type="project" value="UniProtKB-UniRule"/>
</dbReference>
<dbReference type="GO" id="GO:0002099">
    <property type="term" value="P:tRNA wobble guanine modification"/>
    <property type="evidence" value="ECO:0007669"/>
    <property type="project" value="TreeGrafter"/>
</dbReference>
<dbReference type="FunFam" id="3.40.1780.10:FF:000001">
    <property type="entry name" value="S-adenosylmethionine:tRNA ribosyltransferase-isomerase"/>
    <property type="match status" value="1"/>
</dbReference>
<dbReference type="Gene3D" id="2.40.10.240">
    <property type="entry name" value="QueA-like"/>
    <property type="match status" value="1"/>
</dbReference>
<dbReference type="Gene3D" id="3.40.1780.10">
    <property type="entry name" value="QueA-like"/>
    <property type="match status" value="1"/>
</dbReference>
<dbReference type="HAMAP" id="MF_00113">
    <property type="entry name" value="QueA"/>
    <property type="match status" value="1"/>
</dbReference>
<dbReference type="InterPro" id="IPR003699">
    <property type="entry name" value="QueA"/>
</dbReference>
<dbReference type="InterPro" id="IPR042118">
    <property type="entry name" value="QueA_dom1"/>
</dbReference>
<dbReference type="InterPro" id="IPR042119">
    <property type="entry name" value="QueA_dom2"/>
</dbReference>
<dbReference type="InterPro" id="IPR036100">
    <property type="entry name" value="QueA_sf"/>
</dbReference>
<dbReference type="NCBIfam" id="NF001140">
    <property type="entry name" value="PRK00147.1"/>
    <property type="match status" value="1"/>
</dbReference>
<dbReference type="NCBIfam" id="TIGR00113">
    <property type="entry name" value="queA"/>
    <property type="match status" value="1"/>
</dbReference>
<dbReference type="PANTHER" id="PTHR30307">
    <property type="entry name" value="S-ADENOSYLMETHIONINE:TRNA RIBOSYLTRANSFERASE-ISOMERASE"/>
    <property type="match status" value="1"/>
</dbReference>
<dbReference type="PANTHER" id="PTHR30307:SF0">
    <property type="entry name" value="S-ADENOSYLMETHIONINE:TRNA RIBOSYLTRANSFERASE-ISOMERASE"/>
    <property type="match status" value="1"/>
</dbReference>
<dbReference type="Pfam" id="PF02547">
    <property type="entry name" value="Queuosine_synth"/>
    <property type="match status" value="1"/>
</dbReference>
<dbReference type="SUPFAM" id="SSF111337">
    <property type="entry name" value="QueA-like"/>
    <property type="match status" value="1"/>
</dbReference>
<gene>
    <name evidence="1" type="primary">queA</name>
    <name type="ordered locus">Rpal_2875</name>
</gene>
<sequence length="360" mass="38804">MRTELFDFDLPTQNIALRPVSPRDAARMLVVRPSVPLEDRIVRDLPALLAPGDQLVVNDTRVIAAQLTGRRIGRGLEPKIEATLIKRLDGARWQALVKPAKKLLPGDVVRFGHDGRVCLLGHLDATVEAKGDAGEVTLAFSFHGPVLDQAIAEVGATPLPPYIASKRAPDAQDIADYQTMFASNEGAVAAPTAGLHFTAELETALAARGVGLHRITLHVGAGTFLPVKAEDTSEHRMHAEWGTISSGTAEALNAARAAGGRIVAVGTTSLRLLESAARDDGRIAPFADETSIFITPGYRFRAVDMLMTNFHLPRSTLFMLVSAFCGLDTMQAAYAHAIRTGYRFYSYGDASLLFRNDITP</sequence>